<comment type="function">
    <text evidence="1">Is able to transfer iron-sulfur clusters to apo-ferredoxin. Multiple cycles of [2Fe2S] cluster formation and transfer are observed, suggesting that IscA acts catalytically. Recruits intracellular free iron so as to provide iron for the assembly of transient iron-sulfur cluster in IscU in the presence of IscS, L-cysteine and the thioredoxin reductase system TrxA/TrxB.</text>
</comment>
<comment type="cofactor">
    <cofactor evidence="1">
        <name>Fe cation</name>
        <dbReference type="ChEBI" id="CHEBI:24875"/>
    </cofactor>
    <text evidence="1">Binds 2 iron ions per dimer. The dimer may bind additional iron ions.</text>
</comment>
<comment type="subunit">
    <text evidence="1">Homodimer; may form tetramers and higher multimers.</text>
</comment>
<comment type="similarity">
    <text evidence="1">Belongs to the HesB/IscA family.</text>
</comment>
<reference key="1">
    <citation type="journal article" date="2009" name="PLoS Genet.">
        <title>Organised genome dynamics in the Escherichia coli species results in highly diverse adaptive paths.</title>
        <authorList>
            <person name="Touchon M."/>
            <person name="Hoede C."/>
            <person name="Tenaillon O."/>
            <person name="Barbe V."/>
            <person name="Baeriswyl S."/>
            <person name="Bidet P."/>
            <person name="Bingen E."/>
            <person name="Bonacorsi S."/>
            <person name="Bouchier C."/>
            <person name="Bouvet O."/>
            <person name="Calteau A."/>
            <person name="Chiapello H."/>
            <person name="Clermont O."/>
            <person name="Cruveiller S."/>
            <person name="Danchin A."/>
            <person name="Diard M."/>
            <person name="Dossat C."/>
            <person name="Karoui M.E."/>
            <person name="Frapy E."/>
            <person name="Garry L."/>
            <person name="Ghigo J.M."/>
            <person name="Gilles A.M."/>
            <person name="Johnson J."/>
            <person name="Le Bouguenec C."/>
            <person name="Lescat M."/>
            <person name="Mangenot S."/>
            <person name="Martinez-Jehanne V."/>
            <person name="Matic I."/>
            <person name="Nassif X."/>
            <person name="Oztas S."/>
            <person name="Petit M.A."/>
            <person name="Pichon C."/>
            <person name="Rouy Z."/>
            <person name="Ruf C.S."/>
            <person name="Schneider D."/>
            <person name="Tourret J."/>
            <person name="Vacherie B."/>
            <person name="Vallenet D."/>
            <person name="Medigue C."/>
            <person name="Rocha E.P.C."/>
            <person name="Denamur E."/>
        </authorList>
    </citation>
    <scope>NUCLEOTIDE SEQUENCE [LARGE SCALE GENOMIC DNA]</scope>
    <source>
        <strain>IAI39 / ExPEC</strain>
    </source>
</reference>
<accession>B7NRH7</accession>
<proteinExistence type="inferred from homology"/>
<gene>
    <name evidence="1" type="primary">iscA</name>
    <name type="ordered locus">ECIAI39_2729</name>
</gene>
<evidence type="ECO:0000255" key="1">
    <source>
        <dbReference type="HAMAP-Rule" id="MF_01429"/>
    </source>
</evidence>
<sequence length="107" mass="11556">MSITLSDSAAARVNTFLANRGKGFGLRLGVRTSGCSGMAYVLEFVDEPTPEDIVFEDKGVKVVVDGKSLQFLDGTQLDFVKEGLNEGFKFTNPNVKDECGCGESFHV</sequence>
<dbReference type="EMBL" id="CU928164">
    <property type="protein sequence ID" value="CAR18851.1"/>
    <property type="molecule type" value="Genomic_DNA"/>
</dbReference>
<dbReference type="RefSeq" id="WP_000028953.1">
    <property type="nucleotide sequence ID" value="NC_011750.1"/>
</dbReference>
<dbReference type="RefSeq" id="YP_002408667.1">
    <property type="nucleotide sequence ID" value="NC_011750.1"/>
</dbReference>
<dbReference type="SMR" id="B7NRH7"/>
<dbReference type="STRING" id="585057.ECIAI39_2729"/>
<dbReference type="GeneID" id="93774608"/>
<dbReference type="KEGG" id="ect:ECIAI39_2729"/>
<dbReference type="PATRIC" id="fig|585057.6.peg.2838"/>
<dbReference type="HOGENOM" id="CLU_069054_5_1_6"/>
<dbReference type="Proteomes" id="UP000000749">
    <property type="component" value="Chromosome"/>
</dbReference>
<dbReference type="GO" id="GO:0005829">
    <property type="term" value="C:cytosol"/>
    <property type="evidence" value="ECO:0007669"/>
    <property type="project" value="TreeGrafter"/>
</dbReference>
<dbReference type="GO" id="GO:0051537">
    <property type="term" value="F:2 iron, 2 sulfur cluster binding"/>
    <property type="evidence" value="ECO:0007669"/>
    <property type="project" value="TreeGrafter"/>
</dbReference>
<dbReference type="GO" id="GO:0005506">
    <property type="term" value="F:iron ion binding"/>
    <property type="evidence" value="ECO:0007669"/>
    <property type="project" value="UniProtKB-UniRule"/>
</dbReference>
<dbReference type="GO" id="GO:0016226">
    <property type="term" value="P:iron-sulfur cluster assembly"/>
    <property type="evidence" value="ECO:0007669"/>
    <property type="project" value="UniProtKB-UniRule"/>
</dbReference>
<dbReference type="FunFam" id="2.60.300.12:FF:000001">
    <property type="entry name" value="Iron-binding protein IscA"/>
    <property type="match status" value="1"/>
</dbReference>
<dbReference type="Gene3D" id="2.60.300.12">
    <property type="entry name" value="HesB-like domain"/>
    <property type="match status" value="1"/>
</dbReference>
<dbReference type="HAMAP" id="MF_01429">
    <property type="entry name" value="Fe_S_insert_IscA"/>
    <property type="match status" value="1"/>
</dbReference>
<dbReference type="InterPro" id="IPR050322">
    <property type="entry name" value="Fe-S_cluster_asmbl/transfer"/>
</dbReference>
<dbReference type="InterPro" id="IPR000361">
    <property type="entry name" value="FeS_biogenesis"/>
</dbReference>
<dbReference type="InterPro" id="IPR016092">
    <property type="entry name" value="FeS_cluster_insertion"/>
</dbReference>
<dbReference type="InterPro" id="IPR017870">
    <property type="entry name" value="FeS_cluster_insertion_CS"/>
</dbReference>
<dbReference type="InterPro" id="IPR035903">
    <property type="entry name" value="HesB-like_dom_sf"/>
</dbReference>
<dbReference type="InterPro" id="IPR011302">
    <property type="entry name" value="IscA_proteobacteria"/>
</dbReference>
<dbReference type="NCBIfam" id="TIGR00049">
    <property type="entry name" value="iron-sulfur cluster assembly accessory protein"/>
    <property type="match status" value="1"/>
</dbReference>
<dbReference type="NCBIfam" id="TIGR02011">
    <property type="entry name" value="IscA"/>
    <property type="match status" value="1"/>
</dbReference>
<dbReference type="NCBIfam" id="NF007049">
    <property type="entry name" value="PRK09502.1"/>
    <property type="match status" value="1"/>
</dbReference>
<dbReference type="PANTHER" id="PTHR10072:SF41">
    <property type="entry name" value="IRON-SULFUR CLUSTER ASSEMBLY 1 HOMOLOG, MITOCHONDRIAL"/>
    <property type="match status" value="1"/>
</dbReference>
<dbReference type="PANTHER" id="PTHR10072">
    <property type="entry name" value="IRON-SULFUR CLUSTER ASSEMBLY PROTEIN"/>
    <property type="match status" value="1"/>
</dbReference>
<dbReference type="Pfam" id="PF01521">
    <property type="entry name" value="Fe-S_biosyn"/>
    <property type="match status" value="1"/>
</dbReference>
<dbReference type="SUPFAM" id="SSF89360">
    <property type="entry name" value="HesB-like domain"/>
    <property type="match status" value="1"/>
</dbReference>
<dbReference type="PROSITE" id="PS01152">
    <property type="entry name" value="HESB"/>
    <property type="match status" value="1"/>
</dbReference>
<keyword id="KW-0408">Iron</keyword>
<keyword id="KW-0479">Metal-binding</keyword>
<protein>
    <recommendedName>
        <fullName evidence="1">Iron-binding protein IscA</fullName>
    </recommendedName>
    <alternativeName>
        <fullName evidence="1">Iron-sulfur cluster assembly protein</fullName>
    </alternativeName>
</protein>
<organism>
    <name type="scientific">Escherichia coli O7:K1 (strain IAI39 / ExPEC)</name>
    <dbReference type="NCBI Taxonomy" id="585057"/>
    <lineage>
        <taxon>Bacteria</taxon>
        <taxon>Pseudomonadati</taxon>
        <taxon>Pseudomonadota</taxon>
        <taxon>Gammaproteobacteria</taxon>
        <taxon>Enterobacterales</taxon>
        <taxon>Enterobacteriaceae</taxon>
        <taxon>Escherichia</taxon>
    </lineage>
</organism>
<name>ISCA_ECO7I</name>
<feature type="chain" id="PRO_1000145750" description="Iron-binding protein IscA">
    <location>
        <begin position="1"/>
        <end position="107"/>
    </location>
</feature>
<feature type="binding site" evidence="1">
    <location>
        <position position="35"/>
    </location>
    <ligand>
        <name>Fe cation</name>
        <dbReference type="ChEBI" id="CHEBI:24875"/>
    </ligand>
</feature>
<feature type="binding site" evidence="1">
    <location>
        <position position="99"/>
    </location>
    <ligand>
        <name>Fe cation</name>
        <dbReference type="ChEBI" id="CHEBI:24875"/>
    </ligand>
</feature>
<feature type="binding site" evidence="1">
    <location>
        <position position="101"/>
    </location>
    <ligand>
        <name>Fe cation</name>
        <dbReference type="ChEBI" id="CHEBI:24875"/>
    </ligand>
</feature>